<reference key="1">
    <citation type="journal article" date="2002" name="Nucleic Acids Res.">
        <title>Genome sequence of Shigella flexneri 2a: insights into pathogenicity through comparison with genomes of Escherichia coli K12 and O157.</title>
        <authorList>
            <person name="Jin Q."/>
            <person name="Yuan Z."/>
            <person name="Xu J."/>
            <person name="Wang Y."/>
            <person name="Shen Y."/>
            <person name="Lu W."/>
            <person name="Wang J."/>
            <person name="Liu H."/>
            <person name="Yang J."/>
            <person name="Yang F."/>
            <person name="Zhang X."/>
            <person name="Zhang J."/>
            <person name="Yang G."/>
            <person name="Wu H."/>
            <person name="Qu D."/>
            <person name="Dong J."/>
            <person name="Sun L."/>
            <person name="Xue Y."/>
            <person name="Zhao A."/>
            <person name="Gao Y."/>
            <person name="Zhu J."/>
            <person name="Kan B."/>
            <person name="Ding K."/>
            <person name="Chen S."/>
            <person name="Cheng H."/>
            <person name="Yao Z."/>
            <person name="He B."/>
            <person name="Chen R."/>
            <person name="Ma D."/>
            <person name="Qiang B."/>
            <person name="Wen Y."/>
            <person name="Hou Y."/>
            <person name="Yu J."/>
        </authorList>
    </citation>
    <scope>NUCLEOTIDE SEQUENCE [LARGE SCALE GENOMIC DNA]</scope>
    <source>
        <strain>301 / Serotype 2a</strain>
    </source>
</reference>
<reference key="2">
    <citation type="journal article" date="2003" name="Infect. Immun.">
        <title>Complete genome sequence and comparative genomics of Shigella flexneri serotype 2a strain 2457T.</title>
        <authorList>
            <person name="Wei J."/>
            <person name="Goldberg M.B."/>
            <person name="Burland V."/>
            <person name="Venkatesan M.M."/>
            <person name="Deng W."/>
            <person name="Fournier G."/>
            <person name="Mayhew G.F."/>
            <person name="Plunkett G. III"/>
            <person name="Rose D.J."/>
            <person name="Darling A."/>
            <person name="Mau B."/>
            <person name="Perna N.T."/>
            <person name="Payne S.M."/>
            <person name="Runyen-Janecky L.J."/>
            <person name="Zhou S."/>
            <person name="Schwartz D.C."/>
            <person name="Blattner F.R."/>
        </authorList>
    </citation>
    <scope>NUCLEOTIDE SEQUENCE [LARGE SCALE GENOMIC DNA]</scope>
    <source>
        <strain>ATCC 700930 / 2457T / Serotype 2a</strain>
    </source>
</reference>
<sequence>MNTQQLAKLRSIVPEMRRVRHIHFVGIGGAGMGGIAEVLANEGYQISGSDLAPNPVTQQLLNLGATIYFNHRPENVRDASVVVVSSAISADNPEIVAAHEARIPVIRRAEMLAELMRFRHGIAIAGTHGKTTTTAMVSSIYAEAGLDPTFVNGGLVKAAGVHARLGHGRYLIAEADESDASFLHLQPMVAIVTNIEADHMDTYQGDFENLKQTFINFLHNLPFYGRAVMCVDDPVIRELLPRVGRQTTTYGFSEDADVRVEDYQQIGPQGHFTLLRQDKEPMCVTLNAPGRHNALNAAAAVAVATEEGIDDEAILRALESFQGTGRRFDFLGEFPLEPVNGKSGTAMLVDDYGHHPTEVDATIKAARAGWPDKNLVMLFQPHRFTRTRDLYDDFANVLTQVDTLLMLEVYPAGEAPIPGADSRSLCRTIRGRGKIDPILVPDPAQVAEMLAPVLTGNDLILVQGAGNIGKIARSLAEIKLKPQTPEEEQHD</sequence>
<dbReference type="EC" id="6.3.2.8" evidence="1"/>
<dbReference type="EMBL" id="AE005674">
    <property type="protein sequence ID" value="AAN41753.1"/>
    <property type="molecule type" value="Genomic_DNA"/>
</dbReference>
<dbReference type="EMBL" id="AE014073">
    <property type="protein sequence ID" value="AAP15634.1"/>
    <property type="molecule type" value="Genomic_DNA"/>
</dbReference>
<dbReference type="RefSeq" id="NP_706046.1">
    <property type="nucleotide sequence ID" value="NC_004337.2"/>
</dbReference>
<dbReference type="RefSeq" id="WP_001096032.1">
    <property type="nucleotide sequence ID" value="NZ_WPGW01000007.1"/>
</dbReference>
<dbReference type="SMR" id="Q83MF8"/>
<dbReference type="STRING" id="198214.SF0088"/>
<dbReference type="PaxDb" id="198214-SF0088"/>
<dbReference type="GeneID" id="1024549"/>
<dbReference type="KEGG" id="sfl:SF0088"/>
<dbReference type="KEGG" id="sfx:S0090"/>
<dbReference type="PATRIC" id="fig|198214.7.peg.103"/>
<dbReference type="HOGENOM" id="CLU_028104_2_2_6"/>
<dbReference type="UniPathway" id="UPA00219"/>
<dbReference type="Proteomes" id="UP000001006">
    <property type="component" value="Chromosome"/>
</dbReference>
<dbReference type="Proteomes" id="UP000002673">
    <property type="component" value="Chromosome"/>
</dbReference>
<dbReference type="GO" id="GO:0005737">
    <property type="term" value="C:cytoplasm"/>
    <property type="evidence" value="ECO:0007669"/>
    <property type="project" value="UniProtKB-SubCell"/>
</dbReference>
<dbReference type="GO" id="GO:0005524">
    <property type="term" value="F:ATP binding"/>
    <property type="evidence" value="ECO:0007669"/>
    <property type="project" value="UniProtKB-UniRule"/>
</dbReference>
<dbReference type="GO" id="GO:0008763">
    <property type="term" value="F:UDP-N-acetylmuramate-L-alanine ligase activity"/>
    <property type="evidence" value="ECO:0007669"/>
    <property type="project" value="UniProtKB-UniRule"/>
</dbReference>
<dbReference type="GO" id="GO:0051301">
    <property type="term" value="P:cell division"/>
    <property type="evidence" value="ECO:0007669"/>
    <property type="project" value="UniProtKB-KW"/>
</dbReference>
<dbReference type="GO" id="GO:0071555">
    <property type="term" value="P:cell wall organization"/>
    <property type="evidence" value="ECO:0007669"/>
    <property type="project" value="UniProtKB-KW"/>
</dbReference>
<dbReference type="GO" id="GO:0009252">
    <property type="term" value="P:peptidoglycan biosynthetic process"/>
    <property type="evidence" value="ECO:0007669"/>
    <property type="project" value="UniProtKB-UniRule"/>
</dbReference>
<dbReference type="GO" id="GO:0008360">
    <property type="term" value="P:regulation of cell shape"/>
    <property type="evidence" value="ECO:0007669"/>
    <property type="project" value="UniProtKB-KW"/>
</dbReference>
<dbReference type="FunFam" id="3.40.1190.10:FF:000001">
    <property type="entry name" value="UDP-N-acetylmuramate--L-alanine ligase"/>
    <property type="match status" value="1"/>
</dbReference>
<dbReference type="FunFam" id="3.40.50.720:FF:000046">
    <property type="entry name" value="UDP-N-acetylmuramate--L-alanine ligase"/>
    <property type="match status" value="1"/>
</dbReference>
<dbReference type="FunFam" id="3.90.190.20:FF:000001">
    <property type="entry name" value="UDP-N-acetylmuramate--L-alanine ligase"/>
    <property type="match status" value="1"/>
</dbReference>
<dbReference type="Gene3D" id="3.90.190.20">
    <property type="entry name" value="Mur ligase, C-terminal domain"/>
    <property type="match status" value="1"/>
</dbReference>
<dbReference type="Gene3D" id="3.40.1190.10">
    <property type="entry name" value="Mur-like, catalytic domain"/>
    <property type="match status" value="1"/>
</dbReference>
<dbReference type="Gene3D" id="3.40.50.720">
    <property type="entry name" value="NAD(P)-binding Rossmann-like Domain"/>
    <property type="match status" value="1"/>
</dbReference>
<dbReference type="HAMAP" id="MF_00046">
    <property type="entry name" value="MurC"/>
    <property type="match status" value="1"/>
</dbReference>
<dbReference type="InterPro" id="IPR036565">
    <property type="entry name" value="Mur-like_cat_sf"/>
</dbReference>
<dbReference type="InterPro" id="IPR004101">
    <property type="entry name" value="Mur_ligase_C"/>
</dbReference>
<dbReference type="InterPro" id="IPR036615">
    <property type="entry name" value="Mur_ligase_C_dom_sf"/>
</dbReference>
<dbReference type="InterPro" id="IPR013221">
    <property type="entry name" value="Mur_ligase_cen"/>
</dbReference>
<dbReference type="InterPro" id="IPR000713">
    <property type="entry name" value="Mur_ligase_N"/>
</dbReference>
<dbReference type="InterPro" id="IPR050061">
    <property type="entry name" value="MurCDEF_pg_biosynth"/>
</dbReference>
<dbReference type="InterPro" id="IPR005758">
    <property type="entry name" value="UDP-N-AcMur_Ala_ligase_MurC"/>
</dbReference>
<dbReference type="NCBIfam" id="TIGR01082">
    <property type="entry name" value="murC"/>
    <property type="match status" value="1"/>
</dbReference>
<dbReference type="PANTHER" id="PTHR43445:SF3">
    <property type="entry name" value="UDP-N-ACETYLMURAMATE--L-ALANINE LIGASE"/>
    <property type="match status" value="1"/>
</dbReference>
<dbReference type="PANTHER" id="PTHR43445">
    <property type="entry name" value="UDP-N-ACETYLMURAMATE--L-ALANINE LIGASE-RELATED"/>
    <property type="match status" value="1"/>
</dbReference>
<dbReference type="Pfam" id="PF01225">
    <property type="entry name" value="Mur_ligase"/>
    <property type="match status" value="1"/>
</dbReference>
<dbReference type="Pfam" id="PF02875">
    <property type="entry name" value="Mur_ligase_C"/>
    <property type="match status" value="1"/>
</dbReference>
<dbReference type="Pfam" id="PF08245">
    <property type="entry name" value="Mur_ligase_M"/>
    <property type="match status" value="1"/>
</dbReference>
<dbReference type="SUPFAM" id="SSF51984">
    <property type="entry name" value="MurCD N-terminal domain"/>
    <property type="match status" value="1"/>
</dbReference>
<dbReference type="SUPFAM" id="SSF53623">
    <property type="entry name" value="MurD-like peptide ligases, catalytic domain"/>
    <property type="match status" value="1"/>
</dbReference>
<dbReference type="SUPFAM" id="SSF53244">
    <property type="entry name" value="MurD-like peptide ligases, peptide-binding domain"/>
    <property type="match status" value="1"/>
</dbReference>
<proteinExistence type="inferred from homology"/>
<evidence type="ECO:0000255" key="1">
    <source>
        <dbReference type="HAMAP-Rule" id="MF_00046"/>
    </source>
</evidence>
<comment type="function">
    <text evidence="1">Cell wall formation.</text>
</comment>
<comment type="catalytic activity">
    <reaction evidence="1">
        <text>UDP-N-acetyl-alpha-D-muramate + L-alanine + ATP = UDP-N-acetyl-alpha-D-muramoyl-L-alanine + ADP + phosphate + H(+)</text>
        <dbReference type="Rhea" id="RHEA:23372"/>
        <dbReference type="ChEBI" id="CHEBI:15378"/>
        <dbReference type="ChEBI" id="CHEBI:30616"/>
        <dbReference type="ChEBI" id="CHEBI:43474"/>
        <dbReference type="ChEBI" id="CHEBI:57972"/>
        <dbReference type="ChEBI" id="CHEBI:70757"/>
        <dbReference type="ChEBI" id="CHEBI:83898"/>
        <dbReference type="ChEBI" id="CHEBI:456216"/>
        <dbReference type="EC" id="6.3.2.8"/>
    </reaction>
</comment>
<comment type="pathway">
    <text evidence="1">Cell wall biogenesis; peptidoglycan biosynthesis.</text>
</comment>
<comment type="subcellular location">
    <subcellularLocation>
        <location evidence="1">Cytoplasm</location>
    </subcellularLocation>
</comment>
<comment type="similarity">
    <text evidence="1">Belongs to the MurCDEF family.</text>
</comment>
<protein>
    <recommendedName>
        <fullName evidence="1">UDP-N-acetylmuramate--L-alanine ligase</fullName>
        <ecNumber evidence="1">6.3.2.8</ecNumber>
    </recommendedName>
    <alternativeName>
        <fullName evidence="1">UDP-N-acetylmuramoyl-L-alanine synthetase</fullName>
    </alternativeName>
</protein>
<keyword id="KW-0067">ATP-binding</keyword>
<keyword id="KW-0131">Cell cycle</keyword>
<keyword id="KW-0132">Cell division</keyword>
<keyword id="KW-0133">Cell shape</keyword>
<keyword id="KW-0961">Cell wall biogenesis/degradation</keyword>
<keyword id="KW-0963">Cytoplasm</keyword>
<keyword id="KW-0436">Ligase</keyword>
<keyword id="KW-0547">Nucleotide-binding</keyword>
<keyword id="KW-0573">Peptidoglycan synthesis</keyword>
<keyword id="KW-1185">Reference proteome</keyword>
<gene>
    <name evidence="1" type="primary">murC</name>
    <name type="ordered locus">SF0088</name>
    <name type="ordered locus">S0090</name>
</gene>
<name>MURC_SHIFL</name>
<feature type="chain" id="PRO_0000182151" description="UDP-N-acetylmuramate--L-alanine ligase">
    <location>
        <begin position="1"/>
        <end position="491"/>
    </location>
</feature>
<feature type="binding site" evidence="1">
    <location>
        <begin position="126"/>
        <end position="132"/>
    </location>
    <ligand>
        <name>ATP</name>
        <dbReference type="ChEBI" id="CHEBI:30616"/>
    </ligand>
</feature>
<accession>Q83MF8</accession>
<organism>
    <name type="scientific">Shigella flexneri</name>
    <dbReference type="NCBI Taxonomy" id="623"/>
    <lineage>
        <taxon>Bacteria</taxon>
        <taxon>Pseudomonadati</taxon>
        <taxon>Pseudomonadota</taxon>
        <taxon>Gammaproteobacteria</taxon>
        <taxon>Enterobacterales</taxon>
        <taxon>Enterobacteriaceae</taxon>
        <taxon>Shigella</taxon>
    </lineage>
</organism>